<sequence>MKTDFKFSNLLGTVYCQGNLLFSPDGTHLFSPVGNRVTVFNLVDNKSYTLPFSHRKNIARIGLTPQGNLLLSIDEDGQAILTNVPRRVVLYHFSFKAPVTALSFSPSGRHFIVGLGRKIEVWHVPSTPDANADGELEFAPFVKHHTHVQHFDDVRHIEWSHDSRFFLTSSKDLTARIWSVDQEEGFTPTVLSGHRQGVVGAWFSKDQETIYTVSKDGAVFDWQYVAKPGQDEDMVDDDDLAWRIVNKHYFMQNSATVRCAAFHPESNLLVAGFSNGIFGLYEMPDFNMIHTLSISQNEIDFVTINKSGEWLAFGASKLGQLLVWEWQSESYILKQQGHFDSMNSLVYSPDGQRIVTVADDGKIKVWDTESGFCIVTFTEHTSGITACEFSKKGNVLFTSSLDGSIRAWDLIRYRNFRTFTAPERLSFSCMAVDPSGEIVAAGSVDSFDIHIWSVQTGQLLDRLSGHEGPVSSLAFAPNGGLLVSGSWDRTARIWSIFNRTQTSEPLQLNSDVLDIAFRPDSLQIAISTLDGNLSFWSVSEAEQQAGLDGRRDVSGGRKIGDRRTAANVAGTKAFNTIRYSTDGSCLLAGGNSKYICLYSVTTMVLLKKYTVSVNLSIQGTQEFLNSKLLTEAGPQGLLDEQGEASDFEDRIDRSLPGSKRGDPSARRKNPEVRVNGVAFSPNGSAFCAASTEGLLIYSLDTTIQFDPFDLNMEITPTSTLAVLEKEKDYLKALVMAFRLNEAGLIQRVFQAIPYTDIPLVVEQFPNVYVARLLRYVAAQTEQSPHVEFCLLWIKALVDKHGAWLSANRGKVDVELRVVARAVSKMRDEIRKLADENVYMVDYLLGQASAAKETNTTKTLALEWATTGSDEQPGAGGMSLNDVMQQDEGNASEDEWIGLV</sequence>
<gene>
    <name type="ORF">B18D24.40</name>
    <name type="ORF">NCU03794</name>
</gene>
<dbReference type="EMBL" id="AL513466">
    <property type="protein sequence ID" value="CAC28802.1"/>
    <property type="molecule type" value="Genomic_DNA"/>
</dbReference>
<dbReference type="EMBL" id="CM002240">
    <property type="protein sequence ID" value="EAA31947.1"/>
    <property type="molecule type" value="Genomic_DNA"/>
</dbReference>
<dbReference type="RefSeq" id="XP_961183.1">
    <property type="nucleotide sequence ID" value="XM_956090.2"/>
</dbReference>
<dbReference type="SMR" id="Q9C270"/>
<dbReference type="FunCoup" id="Q9C270">
    <property type="interactions" value="785"/>
</dbReference>
<dbReference type="STRING" id="367110.Q9C270"/>
<dbReference type="PaxDb" id="5141-EFNCRP00000003285"/>
<dbReference type="EnsemblFungi" id="EAA31947">
    <property type="protein sequence ID" value="EAA31947"/>
    <property type="gene ID" value="NCU03794"/>
</dbReference>
<dbReference type="GeneID" id="3877368"/>
<dbReference type="KEGG" id="ncr:NCU03794"/>
<dbReference type="VEuPathDB" id="FungiDB:NCU03794"/>
<dbReference type="HOGENOM" id="CLU_010458_0_0_1"/>
<dbReference type="InParanoid" id="Q9C270"/>
<dbReference type="OMA" id="VYEWQSE"/>
<dbReference type="OrthoDB" id="3142434at2759"/>
<dbReference type="Proteomes" id="UP000001805">
    <property type="component" value="Chromosome 2, Linkage Group V"/>
</dbReference>
<dbReference type="GO" id="GO:0005737">
    <property type="term" value="C:cytoplasm"/>
    <property type="evidence" value="ECO:0007669"/>
    <property type="project" value="EnsemblFungi"/>
</dbReference>
<dbReference type="GO" id="GO:0034388">
    <property type="term" value="C:Pwp2p-containing subcomplex of 90S preribosome"/>
    <property type="evidence" value="ECO:0000318"/>
    <property type="project" value="GO_Central"/>
</dbReference>
<dbReference type="GO" id="GO:0032040">
    <property type="term" value="C:small-subunit processome"/>
    <property type="evidence" value="ECO:0000318"/>
    <property type="project" value="GO_Central"/>
</dbReference>
<dbReference type="GO" id="GO:0000480">
    <property type="term" value="P:endonucleolytic cleavage in 5'-ETS of tricistronic rRNA transcript (SSU-rRNA, 5.8S rRNA, LSU-rRNA)"/>
    <property type="evidence" value="ECO:0007669"/>
    <property type="project" value="EnsemblFungi"/>
</dbReference>
<dbReference type="GO" id="GO:0000447">
    <property type="term" value="P:endonucleolytic cleavage in ITS1 to separate SSU-rRNA from 5.8S rRNA and LSU-rRNA from tricistronic rRNA transcript (SSU-rRNA, 5.8S rRNA, LSU-rRNA)"/>
    <property type="evidence" value="ECO:0007669"/>
    <property type="project" value="EnsemblFungi"/>
</dbReference>
<dbReference type="GO" id="GO:0000472">
    <property type="term" value="P:endonucleolytic cleavage to generate mature 5'-end of SSU-rRNA from (SSU-rRNA, 5.8S rRNA, LSU-rRNA)"/>
    <property type="evidence" value="ECO:0007669"/>
    <property type="project" value="EnsemblFungi"/>
</dbReference>
<dbReference type="GO" id="GO:0030010">
    <property type="term" value="P:establishment of cell polarity"/>
    <property type="evidence" value="ECO:0007669"/>
    <property type="project" value="EnsemblFungi"/>
</dbReference>
<dbReference type="GO" id="GO:0000462">
    <property type="term" value="P:maturation of SSU-rRNA from tricistronic rRNA transcript (SSU-rRNA, 5.8S rRNA, LSU-rRNA)"/>
    <property type="evidence" value="ECO:0000318"/>
    <property type="project" value="GO_Central"/>
</dbReference>
<dbReference type="GO" id="GO:0000028">
    <property type="term" value="P:ribosomal small subunit assembly"/>
    <property type="evidence" value="ECO:0000318"/>
    <property type="project" value="GO_Central"/>
</dbReference>
<dbReference type="GO" id="GO:0000920">
    <property type="term" value="P:septum digestion after cytokinesis"/>
    <property type="evidence" value="ECO:0007669"/>
    <property type="project" value="EnsemblFungi"/>
</dbReference>
<dbReference type="CDD" id="cd00200">
    <property type="entry name" value="WD40"/>
    <property type="match status" value="1"/>
</dbReference>
<dbReference type="FunFam" id="2.130.10.10:FF:000470">
    <property type="entry name" value="Periodic tryptophan protein 2 homolog"/>
    <property type="match status" value="1"/>
</dbReference>
<dbReference type="FunFam" id="2.130.10.10:FF:001292">
    <property type="entry name" value="Periodic tryptophan protein 2 homolog"/>
    <property type="match status" value="1"/>
</dbReference>
<dbReference type="Gene3D" id="2.130.10.10">
    <property type="entry name" value="YVTN repeat-like/Quinoprotein amine dehydrogenase"/>
    <property type="match status" value="3"/>
</dbReference>
<dbReference type="InterPro" id="IPR020472">
    <property type="entry name" value="G-protein_beta_WD-40_rep"/>
</dbReference>
<dbReference type="InterPro" id="IPR027145">
    <property type="entry name" value="PWP2"/>
</dbReference>
<dbReference type="InterPro" id="IPR007148">
    <property type="entry name" value="SSU_processome_Utp12"/>
</dbReference>
<dbReference type="InterPro" id="IPR015943">
    <property type="entry name" value="WD40/YVTN_repeat-like_dom_sf"/>
</dbReference>
<dbReference type="InterPro" id="IPR019775">
    <property type="entry name" value="WD40_repeat_CS"/>
</dbReference>
<dbReference type="InterPro" id="IPR036322">
    <property type="entry name" value="WD40_repeat_dom_sf"/>
</dbReference>
<dbReference type="InterPro" id="IPR001680">
    <property type="entry name" value="WD40_rpt"/>
</dbReference>
<dbReference type="PANTHER" id="PTHR19858:SF0">
    <property type="entry name" value="PERIODIC TRYPTOPHAN PROTEIN 2 HOMOLOG"/>
    <property type="match status" value="1"/>
</dbReference>
<dbReference type="PANTHER" id="PTHR19858">
    <property type="entry name" value="WD40 REPEAT PROTEIN"/>
    <property type="match status" value="1"/>
</dbReference>
<dbReference type="Pfam" id="PF04003">
    <property type="entry name" value="Utp12"/>
    <property type="match status" value="1"/>
</dbReference>
<dbReference type="Pfam" id="PF00400">
    <property type="entry name" value="WD40"/>
    <property type="match status" value="5"/>
</dbReference>
<dbReference type="PRINTS" id="PR00320">
    <property type="entry name" value="GPROTEINBRPT"/>
</dbReference>
<dbReference type="SMART" id="SM00320">
    <property type="entry name" value="WD40"/>
    <property type="match status" value="13"/>
</dbReference>
<dbReference type="SUPFAM" id="SSF50978">
    <property type="entry name" value="WD40 repeat-like"/>
    <property type="match status" value="3"/>
</dbReference>
<dbReference type="PROSITE" id="PS00678">
    <property type="entry name" value="WD_REPEATS_1"/>
    <property type="match status" value="2"/>
</dbReference>
<dbReference type="PROSITE" id="PS50082">
    <property type="entry name" value="WD_REPEATS_2"/>
    <property type="match status" value="5"/>
</dbReference>
<dbReference type="PROSITE" id="PS50294">
    <property type="entry name" value="WD_REPEATS_REGION"/>
    <property type="match status" value="1"/>
</dbReference>
<protein>
    <recommendedName>
        <fullName>Periodic tryptophan protein 2 homolog</fullName>
    </recommendedName>
</protein>
<organism>
    <name type="scientific">Neurospora crassa (strain ATCC 24698 / 74-OR23-1A / CBS 708.71 / DSM 1257 / FGSC 987)</name>
    <dbReference type="NCBI Taxonomy" id="367110"/>
    <lineage>
        <taxon>Eukaryota</taxon>
        <taxon>Fungi</taxon>
        <taxon>Dikarya</taxon>
        <taxon>Ascomycota</taxon>
        <taxon>Pezizomycotina</taxon>
        <taxon>Sordariomycetes</taxon>
        <taxon>Sordariomycetidae</taxon>
        <taxon>Sordariales</taxon>
        <taxon>Sordariaceae</taxon>
        <taxon>Neurospora</taxon>
    </lineage>
</organism>
<accession>Q9C270</accession>
<accession>Q7RVU5</accession>
<feature type="chain" id="PRO_0000051177" description="Periodic tryptophan protein 2 homolog">
    <location>
        <begin position="1"/>
        <end position="899"/>
    </location>
</feature>
<feature type="repeat" description="WD 1">
    <location>
        <begin position="9"/>
        <end position="52"/>
    </location>
</feature>
<feature type="repeat" description="WD 2">
    <location>
        <begin position="53"/>
        <end position="92"/>
    </location>
</feature>
<feature type="repeat" description="WD 3">
    <location>
        <begin position="94"/>
        <end position="132"/>
    </location>
</feature>
<feature type="repeat" description="WD 4">
    <location>
        <begin position="149"/>
        <end position="188"/>
    </location>
</feature>
<feature type="repeat" description="WD 5">
    <location>
        <begin position="193"/>
        <end position="232"/>
    </location>
</feature>
<feature type="repeat" description="WD 6">
    <location>
        <begin position="252"/>
        <end position="291"/>
    </location>
</feature>
<feature type="repeat" description="WD 7">
    <location>
        <begin position="294"/>
        <end position="334"/>
    </location>
</feature>
<feature type="repeat" description="WD 8">
    <location>
        <begin position="337"/>
        <end position="376"/>
    </location>
</feature>
<feature type="repeat" description="WD 9">
    <location>
        <begin position="379"/>
        <end position="418"/>
    </location>
</feature>
<feature type="repeat" description="WD 10">
    <location>
        <begin position="422"/>
        <end position="464"/>
    </location>
</feature>
<feature type="repeat" description="WD 11">
    <location>
        <begin position="465"/>
        <end position="504"/>
    </location>
</feature>
<feature type="repeat" description="WD 12">
    <location>
        <begin position="507"/>
        <end position="546"/>
    </location>
</feature>
<feature type="repeat" description="WD 13">
    <location>
        <begin position="569"/>
        <end position="608"/>
    </location>
</feature>
<feature type="repeat" description="WD 14">
    <location>
        <begin position="669"/>
        <end position="709"/>
    </location>
</feature>
<feature type="region of interest" description="Disordered" evidence="1">
    <location>
        <begin position="639"/>
        <end position="668"/>
    </location>
</feature>
<feature type="region of interest" description="Disordered" evidence="1">
    <location>
        <begin position="866"/>
        <end position="899"/>
    </location>
</feature>
<feature type="compositionally biased region" description="Basic and acidic residues" evidence="1">
    <location>
        <begin position="647"/>
        <end position="668"/>
    </location>
</feature>
<feature type="compositionally biased region" description="Acidic residues" evidence="1">
    <location>
        <begin position="889"/>
        <end position="899"/>
    </location>
</feature>
<reference key="1">
    <citation type="journal article" date="2003" name="Nucleic Acids Res.">
        <title>What's in the genome of a filamentous fungus? Analysis of the Neurospora genome sequence.</title>
        <authorList>
            <person name="Mannhaupt G."/>
            <person name="Montrone C."/>
            <person name="Haase D."/>
            <person name="Mewes H.-W."/>
            <person name="Aign V."/>
            <person name="Hoheisel J.D."/>
            <person name="Fartmann B."/>
            <person name="Nyakatura G."/>
            <person name="Kempken F."/>
            <person name="Maier J."/>
            <person name="Schulte U."/>
        </authorList>
    </citation>
    <scope>NUCLEOTIDE SEQUENCE [LARGE SCALE GENOMIC DNA]</scope>
    <source>
        <strain>ATCC 24698 / 74-OR23-1A / CBS 708.71 / DSM 1257 / FGSC 987</strain>
    </source>
</reference>
<reference key="2">
    <citation type="journal article" date="2003" name="Nature">
        <title>The genome sequence of the filamentous fungus Neurospora crassa.</title>
        <authorList>
            <person name="Galagan J.E."/>
            <person name="Calvo S.E."/>
            <person name="Borkovich K.A."/>
            <person name="Selker E.U."/>
            <person name="Read N.D."/>
            <person name="Jaffe D.B."/>
            <person name="FitzHugh W."/>
            <person name="Ma L.-J."/>
            <person name="Smirnov S."/>
            <person name="Purcell S."/>
            <person name="Rehman B."/>
            <person name="Elkins T."/>
            <person name="Engels R."/>
            <person name="Wang S."/>
            <person name="Nielsen C.B."/>
            <person name="Butler J."/>
            <person name="Endrizzi M."/>
            <person name="Qui D."/>
            <person name="Ianakiev P."/>
            <person name="Bell-Pedersen D."/>
            <person name="Nelson M.A."/>
            <person name="Werner-Washburne M."/>
            <person name="Selitrennikoff C.P."/>
            <person name="Kinsey J.A."/>
            <person name="Braun E.L."/>
            <person name="Zelter A."/>
            <person name="Schulte U."/>
            <person name="Kothe G.O."/>
            <person name="Jedd G."/>
            <person name="Mewes H.-W."/>
            <person name="Staben C."/>
            <person name="Marcotte E."/>
            <person name="Greenberg D."/>
            <person name="Roy A."/>
            <person name="Foley K."/>
            <person name="Naylor J."/>
            <person name="Stange-Thomann N."/>
            <person name="Barrett R."/>
            <person name="Gnerre S."/>
            <person name="Kamal M."/>
            <person name="Kamvysselis M."/>
            <person name="Mauceli E.W."/>
            <person name="Bielke C."/>
            <person name="Rudd S."/>
            <person name="Frishman D."/>
            <person name="Krystofova S."/>
            <person name="Rasmussen C."/>
            <person name="Metzenberg R.L."/>
            <person name="Perkins D.D."/>
            <person name="Kroken S."/>
            <person name="Cogoni C."/>
            <person name="Macino G."/>
            <person name="Catcheside D.E.A."/>
            <person name="Li W."/>
            <person name="Pratt R.J."/>
            <person name="Osmani S.A."/>
            <person name="DeSouza C.P.C."/>
            <person name="Glass N.L."/>
            <person name="Orbach M.J."/>
            <person name="Berglund J.A."/>
            <person name="Voelker R."/>
            <person name="Yarden O."/>
            <person name="Plamann M."/>
            <person name="Seiler S."/>
            <person name="Dunlap J.C."/>
            <person name="Radford A."/>
            <person name="Aramayo R."/>
            <person name="Natvig D.O."/>
            <person name="Alex L.A."/>
            <person name="Mannhaupt G."/>
            <person name="Ebbole D.J."/>
            <person name="Freitag M."/>
            <person name="Paulsen I."/>
            <person name="Sachs M.S."/>
            <person name="Lander E.S."/>
            <person name="Nusbaum C."/>
            <person name="Birren B.W."/>
        </authorList>
    </citation>
    <scope>NUCLEOTIDE SEQUENCE [LARGE SCALE GENOMIC DNA]</scope>
    <source>
        <strain>ATCC 24698 / 74-OR23-1A / CBS 708.71 / DSM 1257 / FGSC 987</strain>
    </source>
</reference>
<comment type="similarity">
    <text evidence="2">Belongs to the WD repeat PWP2 family.</text>
</comment>
<name>PWP2_NEUCR</name>
<evidence type="ECO:0000256" key="1">
    <source>
        <dbReference type="SAM" id="MobiDB-lite"/>
    </source>
</evidence>
<evidence type="ECO:0000305" key="2"/>
<proteinExistence type="inferred from homology"/>
<keyword id="KW-1185">Reference proteome</keyword>
<keyword id="KW-0677">Repeat</keyword>
<keyword id="KW-0853">WD repeat</keyword>